<evidence type="ECO:0000255" key="1">
    <source>
        <dbReference type="HAMAP-Rule" id="MF_00837"/>
    </source>
</evidence>
<organism>
    <name type="scientific">Dickeya chrysanthemi (strain Ech1591)</name>
    <name type="common">Dickeya zeae (strain Ech1591)</name>
    <dbReference type="NCBI Taxonomy" id="561229"/>
    <lineage>
        <taxon>Bacteria</taxon>
        <taxon>Pseudomonadati</taxon>
        <taxon>Pseudomonadota</taxon>
        <taxon>Gammaproteobacteria</taxon>
        <taxon>Enterobacterales</taxon>
        <taxon>Pectobacteriaceae</taxon>
        <taxon>Dickeya</taxon>
    </lineage>
</organism>
<comment type="function">
    <text evidence="1">Transfers a fatty acid residue from the sn-1 position of a phospholipid to the N-linked hydroxyfatty acid chain on the proximal unit of lipid A or its precursors.</text>
</comment>
<comment type="catalytic activity">
    <reaction evidence="1">
        <text>a lipid A + a 1,2-diacyl-sn-glycero-3-phosphocholine = a hepta-acyl lipid A + a 2-acyl-sn-glycero-3-phosphocholine</text>
        <dbReference type="Rhea" id="RHEA:74275"/>
        <dbReference type="ChEBI" id="CHEBI:57643"/>
        <dbReference type="ChEBI" id="CHEBI:57875"/>
        <dbReference type="ChEBI" id="CHEBI:193141"/>
        <dbReference type="ChEBI" id="CHEBI:193142"/>
        <dbReference type="EC" id="2.3.1.251"/>
    </reaction>
</comment>
<comment type="catalytic activity">
    <reaction evidence="1">
        <text>a lipid IVA + a 1,2-diacyl-sn-glycero-3-phosphocholine = a lipid IVB + a 2-acyl-sn-glycero-3-phosphocholine</text>
        <dbReference type="Rhea" id="RHEA:74279"/>
        <dbReference type="ChEBI" id="CHEBI:57643"/>
        <dbReference type="ChEBI" id="CHEBI:57875"/>
        <dbReference type="ChEBI" id="CHEBI:176425"/>
        <dbReference type="ChEBI" id="CHEBI:193143"/>
        <dbReference type="EC" id="2.3.1.251"/>
    </reaction>
</comment>
<comment type="catalytic activity">
    <reaction evidence="1">
        <text>a lipid IIA + a 1,2-diacyl-sn-glycero-3-phosphocholine = a lipid IIB + a 2-acyl-sn-glycero-3-phosphocholine</text>
        <dbReference type="Rhea" id="RHEA:74283"/>
        <dbReference type="ChEBI" id="CHEBI:57643"/>
        <dbReference type="ChEBI" id="CHEBI:57875"/>
        <dbReference type="ChEBI" id="CHEBI:193144"/>
        <dbReference type="ChEBI" id="CHEBI:193145"/>
        <dbReference type="EC" id="2.3.1.251"/>
    </reaction>
</comment>
<comment type="subunit">
    <text evidence="1">Homodimer.</text>
</comment>
<comment type="subcellular location">
    <subcellularLocation>
        <location evidence="1">Cell outer membrane</location>
    </subcellularLocation>
</comment>
<comment type="similarity">
    <text evidence="1">Belongs to the lipid A palmitoyltransferase family.</text>
</comment>
<gene>
    <name evidence="1" type="primary">pagP</name>
    <name type="ordered locus">Dd1591_3937</name>
</gene>
<feature type="signal peptide" evidence="1">
    <location>
        <begin position="1"/>
        <end position="30"/>
    </location>
</feature>
<feature type="chain" id="PRO_5000484374" description="Lipid A acyltransferase PagP">
    <location>
        <begin position="31"/>
        <end position="195"/>
    </location>
</feature>
<feature type="active site" evidence="1">
    <location>
        <position position="67"/>
    </location>
</feature>
<feature type="active site" evidence="1">
    <location>
        <position position="110"/>
    </location>
</feature>
<feature type="active site" evidence="1">
    <location>
        <position position="111"/>
    </location>
</feature>
<feature type="site" description="Role in lipopolysaccharide recognition" evidence="1">
    <location>
        <position position="76"/>
    </location>
</feature>
<feature type="site" description="Role in the phospholipid gating" evidence="1">
    <location>
        <position position="181"/>
    </location>
</feature>
<sequence>MRLTLTSRSRLFVLSSLLFISTFDVLSAQAAPANTAPSFWQRAGDNLSDTWHHWQSQDLYVPVMTWHNRWTYDKEKTDRYNERPWGAGYGVSRLDCDGDWHSLYMMAFKDSFNKWEPIGGYGYEKRWRPLEDQDFQLGLGFTAGVTLRDNWNYIPLPVLLPMASLSYQRLSFQATYIPGTYNNGNVFFAWLRWQF</sequence>
<protein>
    <recommendedName>
        <fullName evidence="1">Lipid A acyltransferase PagP</fullName>
        <ecNumber evidence="1">2.3.1.251</ecNumber>
    </recommendedName>
    <alternativeName>
        <fullName evidence="1">Lipid A acylation protein</fullName>
    </alternativeName>
</protein>
<accession>C6CNE4</accession>
<name>PAGP_DICC1</name>
<proteinExistence type="inferred from homology"/>
<keyword id="KW-0012">Acyltransferase</keyword>
<keyword id="KW-0998">Cell outer membrane</keyword>
<keyword id="KW-0472">Membrane</keyword>
<keyword id="KW-0732">Signal</keyword>
<keyword id="KW-0808">Transferase</keyword>
<dbReference type="EC" id="2.3.1.251" evidence="1"/>
<dbReference type="EMBL" id="CP001655">
    <property type="protein sequence ID" value="ACT08737.1"/>
    <property type="molecule type" value="Genomic_DNA"/>
</dbReference>
<dbReference type="RefSeq" id="WP_015848235.1">
    <property type="nucleotide sequence ID" value="NC_012912.1"/>
</dbReference>
<dbReference type="SMR" id="C6CNE4"/>
<dbReference type="STRING" id="561229.Dd1591_3937"/>
<dbReference type="GeneID" id="45081967"/>
<dbReference type="KEGG" id="dze:Dd1591_3937"/>
<dbReference type="eggNOG" id="ENOG502Z7SY">
    <property type="taxonomic scope" value="Bacteria"/>
</dbReference>
<dbReference type="HOGENOM" id="CLU_104099_0_0_6"/>
<dbReference type="OrthoDB" id="9156803at2"/>
<dbReference type="Proteomes" id="UP000002735">
    <property type="component" value="Chromosome"/>
</dbReference>
<dbReference type="GO" id="GO:0009279">
    <property type="term" value="C:cell outer membrane"/>
    <property type="evidence" value="ECO:0007669"/>
    <property type="project" value="UniProtKB-SubCell"/>
</dbReference>
<dbReference type="GO" id="GO:0016746">
    <property type="term" value="F:acyltransferase activity"/>
    <property type="evidence" value="ECO:0007669"/>
    <property type="project" value="UniProtKB-UniRule"/>
</dbReference>
<dbReference type="GO" id="GO:0009245">
    <property type="term" value="P:lipid A biosynthetic process"/>
    <property type="evidence" value="ECO:0007669"/>
    <property type="project" value="UniProtKB-UniRule"/>
</dbReference>
<dbReference type="FunFam" id="2.40.160.20:FF:000002">
    <property type="entry name" value="Lipid A palmitoyltransferase PagP"/>
    <property type="match status" value="1"/>
</dbReference>
<dbReference type="Gene3D" id="2.40.160.20">
    <property type="match status" value="1"/>
</dbReference>
<dbReference type="HAMAP" id="MF_00837">
    <property type="entry name" value="PagP_transferase"/>
    <property type="match status" value="1"/>
</dbReference>
<dbReference type="InterPro" id="IPR009746">
    <property type="entry name" value="LipidA_acyl_PagP"/>
</dbReference>
<dbReference type="InterPro" id="IPR011250">
    <property type="entry name" value="OMP/PagP_b-brl"/>
</dbReference>
<dbReference type="NCBIfam" id="NF008271">
    <property type="entry name" value="PRK11045.1"/>
    <property type="match status" value="1"/>
</dbReference>
<dbReference type="Pfam" id="PF07017">
    <property type="entry name" value="PagP"/>
    <property type="match status" value="1"/>
</dbReference>
<dbReference type="SUPFAM" id="SSF56925">
    <property type="entry name" value="OMPA-like"/>
    <property type="match status" value="1"/>
</dbReference>
<reference key="1">
    <citation type="submission" date="2009-06" db="EMBL/GenBank/DDBJ databases">
        <title>Complete sequence of Dickeya zeae Ech1591.</title>
        <authorList>
            <consortium name="US DOE Joint Genome Institute"/>
            <person name="Lucas S."/>
            <person name="Copeland A."/>
            <person name="Lapidus A."/>
            <person name="Glavina del Rio T."/>
            <person name="Tice H."/>
            <person name="Bruce D."/>
            <person name="Goodwin L."/>
            <person name="Pitluck S."/>
            <person name="Chertkov O."/>
            <person name="Brettin T."/>
            <person name="Detter J.C."/>
            <person name="Han C."/>
            <person name="Larimer F."/>
            <person name="Land M."/>
            <person name="Hauser L."/>
            <person name="Kyrpides N."/>
            <person name="Ovchinnikova G."/>
            <person name="Balakrishnan V."/>
            <person name="Glasner J."/>
            <person name="Perna N.T."/>
        </authorList>
    </citation>
    <scope>NUCLEOTIDE SEQUENCE [LARGE SCALE GENOMIC DNA]</scope>
    <source>
        <strain>Ech1591</strain>
    </source>
</reference>